<sequence length="414" mass="45003">MVSTFSRKDQNYKNDDLNQPSIEGRFGKYGGQYVPETLMPALFELEDAASNAWKDKLFVEELNHLLKTYVGRETPLYEAKRLTEHYKNKQATPRIWLKREDLNHTGAHKINNALGQALLAIRMGKKRIIAETGAGQHGVATATVCARFGLKCIIYMGAEDIKRQSLNVFRMKLLGAEVKVVNSGTATLKDATSEAIRDWVSNVETTHYILGSVAGPHPFPKIVRDFHAVIGEETKKQCLESFGSLPDILLACVGGGSNAMGLFHPFVKETSVRLIGVEAAGSGVDTDKHAATITKGSVGILHGSMSLLLQDDNGQVQEAHSISAGLDYPGVGPEHSHLKDIGRAEYGSVTDQEALDALKLVSELEGIIPALETAHAFAWLDKLCPTLEKDTNIVINCSGRGDKDVNTVASSLDI</sequence>
<feature type="chain" id="PRO_1000018372" description="Tryptophan synthase beta chain">
    <location>
        <begin position="1"/>
        <end position="414"/>
    </location>
</feature>
<feature type="modified residue" description="N6-(pyridoxal phosphate)lysine" evidence="1">
    <location>
        <position position="109"/>
    </location>
</feature>
<protein>
    <recommendedName>
        <fullName evidence="1">Tryptophan synthase beta chain</fullName>
        <ecNumber evidence="1">4.2.1.20</ecNumber>
    </recommendedName>
</protein>
<dbReference type="EC" id="4.2.1.20" evidence="1"/>
<dbReference type="EMBL" id="CP000551">
    <property type="protein sequence ID" value="ABM69470.1"/>
    <property type="molecule type" value="Genomic_DNA"/>
</dbReference>
<dbReference type="RefSeq" id="WP_011817657.1">
    <property type="nucleotide sequence ID" value="NC_008816.1"/>
</dbReference>
<dbReference type="SMR" id="A2BNV9"/>
<dbReference type="STRING" id="146891.A9601_01821"/>
<dbReference type="KEGG" id="pmb:A9601_01821"/>
<dbReference type="eggNOG" id="COG0133">
    <property type="taxonomic scope" value="Bacteria"/>
</dbReference>
<dbReference type="HOGENOM" id="CLU_016734_3_1_3"/>
<dbReference type="OrthoDB" id="9766131at2"/>
<dbReference type="UniPathway" id="UPA00035">
    <property type="reaction ID" value="UER00044"/>
</dbReference>
<dbReference type="Proteomes" id="UP000002590">
    <property type="component" value="Chromosome"/>
</dbReference>
<dbReference type="GO" id="GO:0005737">
    <property type="term" value="C:cytoplasm"/>
    <property type="evidence" value="ECO:0007669"/>
    <property type="project" value="TreeGrafter"/>
</dbReference>
<dbReference type="GO" id="GO:0004834">
    <property type="term" value="F:tryptophan synthase activity"/>
    <property type="evidence" value="ECO:0007669"/>
    <property type="project" value="UniProtKB-UniRule"/>
</dbReference>
<dbReference type="CDD" id="cd06446">
    <property type="entry name" value="Trp-synth_B"/>
    <property type="match status" value="1"/>
</dbReference>
<dbReference type="FunFam" id="3.40.50.1100:FF:000001">
    <property type="entry name" value="Tryptophan synthase beta chain"/>
    <property type="match status" value="1"/>
</dbReference>
<dbReference type="FunFam" id="3.40.50.1100:FF:000004">
    <property type="entry name" value="Tryptophan synthase beta chain"/>
    <property type="match status" value="1"/>
</dbReference>
<dbReference type="Gene3D" id="3.40.50.1100">
    <property type="match status" value="2"/>
</dbReference>
<dbReference type="HAMAP" id="MF_00133">
    <property type="entry name" value="Trp_synth_beta"/>
    <property type="match status" value="1"/>
</dbReference>
<dbReference type="InterPro" id="IPR006653">
    <property type="entry name" value="Trp_synth_b_CS"/>
</dbReference>
<dbReference type="InterPro" id="IPR006654">
    <property type="entry name" value="Trp_synth_beta"/>
</dbReference>
<dbReference type="InterPro" id="IPR023026">
    <property type="entry name" value="Trp_synth_beta/beta-like"/>
</dbReference>
<dbReference type="InterPro" id="IPR001926">
    <property type="entry name" value="TrpB-like_PALP"/>
</dbReference>
<dbReference type="InterPro" id="IPR036052">
    <property type="entry name" value="TrpB-like_PALP_sf"/>
</dbReference>
<dbReference type="NCBIfam" id="TIGR00263">
    <property type="entry name" value="trpB"/>
    <property type="match status" value="1"/>
</dbReference>
<dbReference type="PANTHER" id="PTHR48077:SF3">
    <property type="entry name" value="TRYPTOPHAN SYNTHASE"/>
    <property type="match status" value="1"/>
</dbReference>
<dbReference type="PANTHER" id="PTHR48077">
    <property type="entry name" value="TRYPTOPHAN SYNTHASE-RELATED"/>
    <property type="match status" value="1"/>
</dbReference>
<dbReference type="Pfam" id="PF00291">
    <property type="entry name" value="PALP"/>
    <property type="match status" value="1"/>
</dbReference>
<dbReference type="PIRSF" id="PIRSF001413">
    <property type="entry name" value="Trp_syn_beta"/>
    <property type="match status" value="1"/>
</dbReference>
<dbReference type="SUPFAM" id="SSF53686">
    <property type="entry name" value="Tryptophan synthase beta subunit-like PLP-dependent enzymes"/>
    <property type="match status" value="1"/>
</dbReference>
<dbReference type="PROSITE" id="PS00168">
    <property type="entry name" value="TRP_SYNTHASE_BETA"/>
    <property type="match status" value="1"/>
</dbReference>
<keyword id="KW-0028">Amino-acid biosynthesis</keyword>
<keyword id="KW-0057">Aromatic amino acid biosynthesis</keyword>
<keyword id="KW-0456">Lyase</keyword>
<keyword id="KW-0663">Pyridoxal phosphate</keyword>
<keyword id="KW-0822">Tryptophan biosynthesis</keyword>
<comment type="function">
    <text evidence="1">The beta subunit is responsible for the synthesis of L-tryptophan from indole and L-serine.</text>
</comment>
<comment type="catalytic activity">
    <reaction evidence="1">
        <text>(1S,2R)-1-C-(indol-3-yl)glycerol 3-phosphate + L-serine = D-glyceraldehyde 3-phosphate + L-tryptophan + H2O</text>
        <dbReference type="Rhea" id="RHEA:10532"/>
        <dbReference type="ChEBI" id="CHEBI:15377"/>
        <dbReference type="ChEBI" id="CHEBI:33384"/>
        <dbReference type="ChEBI" id="CHEBI:57912"/>
        <dbReference type="ChEBI" id="CHEBI:58866"/>
        <dbReference type="ChEBI" id="CHEBI:59776"/>
        <dbReference type="EC" id="4.2.1.20"/>
    </reaction>
</comment>
<comment type="cofactor">
    <cofactor evidence="1">
        <name>pyridoxal 5'-phosphate</name>
        <dbReference type="ChEBI" id="CHEBI:597326"/>
    </cofactor>
</comment>
<comment type="pathway">
    <text evidence="1">Amino-acid biosynthesis; L-tryptophan biosynthesis; L-tryptophan from chorismate: step 5/5.</text>
</comment>
<comment type="subunit">
    <text evidence="1">Tetramer of two alpha and two beta chains.</text>
</comment>
<comment type="similarity">
    <text evidence="1">Belongs to the TrpB family.</text>
</comment>
<reference key="1">
    <citation type="journal article" date="2007" name="PLoS Genet.">
        <title>Patterns and implications of gene gain and loss in the evolution of Prochlorococcus.</title>
        <authorList>
            <person name="Kettler G.C."/>
            <person name="Martiny A.C."/>
            <person name="Huang K."/>
            <person name="Zucker J."/>
            <person name="Coleman M.L."/>
            <person name="Rodrigue S."/>
            <person name="Chen F."/>
            <person name="Lapidus A."/>
            <person name="Ferriera S."/>
            <person name="Johnson J."/>
            <person name="Steglich C."/>
            <person name="Church G.M."/>
            <person name="Richardson P."/>
            <person name="Chisholm S.W."/>
        </authorList>
    </citation>
    <scope>NUCLEOTIDE SEQUENCE [LARGE SCALE GENOMIC DNA]</scope>
    <source>
        <strain>AS9601</strain>
    </source>
</reference>
<evidence type="ECO:0000255" key="1">
    <source>
        <dbReference type="HAMAP-Rule" id="MF_00133"/>
    </source>
</evidence>
<accession>A2BNV9</accession>
<name>TRPB_PROMS</name>
<gene>
    <name evidence="1" type="primary">trpB</name>
    <name type="ordered locus">A9601_01821</name>
</gene>
<proteinExistence type="inferred from homology"/>
<organism>
    <name type="scientific">Prochlorococcus marinus (strain AS9601)</name>
    <dbReference type="NCBI Taxonomy" id="146891"/>
    <lineage>
        <taxon>Bacteria</taxon>
        <taxon>Bacillati</taxon>
        <taxon>Cyanobacteriota</taxon>
        <taxon>Cyanophyceae</taxon>
        <taxon>Synechococcales</taxon>
        <taxon>Prochlorococcaceae</taxon>
        <taxon>Prochlorococcus</taxon>
    </lineage>
</organism>